<sequence>MAKKVQAYVKLQVAAGMANPSPPVGPALGQQGVNIMEFCKAFNAKTESVEKGLPIPVVITVYSDRSFTFVTKTPPAAVLLKKAAGIKSGSGKPNKDKVGKVTSAQVREIAETKAADMTGSDVDAMARSIAGTARSMGLVVED</sequence>
<accession>C6DHR1</accession>
<reference key="1">
    <citation type="submission" date="2009-07" db="EMBL/GenBank/DDBJ databases">
        <title>Complete sequence of Pectobacterium carotovorum subsp. carotovorum PC1.</title>
        <authorList>
            <consortium name="US DOE Joint Genome Institute"/>
            <person name="Lucas S."/>
            <person name="Copeland A."/>
            <person name="Lapidus A."/>
            <person name="Glavina del Rio T."/>
            <person name="Tice H."/>
            <person name="Bruce D."/>
            <person name="Goodwin L."/>
            <person name="Pitluck S."/>
            <person name="Munk A.C."/>
            <person name="Brettin T."/>
            <person name="Detter J.C."/>
            <person name="Han C."/>
            <person name="Tapia R."/>
            <person name="Larimer F."/>
            <person name="Land M."/>
            <person name="Hauser L."/>
            <person name="Kyrpides N."/>
            <person name="Mikhailova N."/>
            <person name="Balakrishnan V."/>
            <person name="Glasner J."/>
            <person name="Perna N.T."/>
        </authorList>
    </citation>
    <scope>NUCLEOTIDE SEQUENCE [LARGE SCALE GENOMIC DNA]</scope>
    <source>
        <strain>PC1</strain>
    </source>
</reference>
<name>RL11_PECCP</name>
<evidence type="ECO:0000255" key="1">
    <source>
        <dbReference type="HAMAP-Rule" id="MF_00736"/>
    </source>
</evidence>
<evidence type="ECO:0000305" key="2"/>
<comment type="function">
    <text evidence="1">Forms part of the ribosomal stalk which helps the ribosome interact with GTP-bound translation factors.</text>
</comment>
<comment type="subunit">
    <text evidence="1">Part of the ribosomal stalk of the 50S ribosomal subunit. Interacts with L10 and the large rRNA to form the base of the stalk. L10 forms an elongated spine to which L12 dimers bind in a sequential fashion forming a multimeric L10(L12)X complex.</text>
</comment>
<comment type="PTM">
    <text evidence="1">One or more lysine residues are methylated.</text>
</comment>
<comment type="similarity">
    <text evidence="1">Belongs to the universal ribosomal protein uL11 family.</text>
</comment>
<protein>
    <recommendedName>
        <fullName evidence="1">Large ribosomal subunit protein uL11</fullName>
    </recommendedName>
    <alternativeName>
        <fullName evidence="2">50S ribosomal protein L11</fullName>
    </alternativeName>
</protein>
<feature type="chain" id="PRO_1000212782" description="Large ribosomal subunit protein uL11">
    <location>
        <begin position="1"/>
        <end position="142"/>
    </location>
</feature>
<keyword id="KW-0488">Methylation</keyword>
<keyword id="KW-0687">Ribonucleoprotein</keyword>
<keyword id="KW-0689">Ribosomal protein</keyword>
<keyword id="KW-0694">RNA-binding</keyword>
<keyword id="KW-0699">rRNA-binding</keyword>
<gene>
    <name evidence="1" type="primary">rplK</name>
    <name type="ordered locus">PC1_0201</name>
</gene>
<proteinExistence type="inferred from homology"/>
<dbReference type="EMBL" id="CP001657">
    <property type="protein sequence ID" value="ACT11261.1"/>
    <property type="molecule type" value="Genomic_DNA"/>
</dbReference>
<dbReference type="RefSeq" id="WP_012772932.1">
    <property type="nucleotide sequence ID" value="NC_012917.1"/>
</dbReference>
<dbReference type="SMR" id="C6DHR1"/>
<dbReference type="STRING" id="561230.PC1_0201"/>
<dbReference type="GeneID" id="67796002"/>
<dbReference type="KEGG" id="pct:PC1_0201"/>
<dbReference type="eggNOG" id="COG0080">
    <property type="taxonomic scope" value="Bacteria"/>
</dbReference>
<dbReference type="HOGENOM" id="CLU_074237_2_0_6"/>
<dbReference type="OrthoDB" id="9802408at2"/>
<dbReference type="Proteomes" id="UP000002736">
    <property type="component" value="Chromosome"/>
</dbReference>
<dbReference type="GO" id="GO:0022625">
    <property type="term" value="C:cytosolic large ribosomal subunit"/>
    <property type="evidence" value="ECO:0007669"/>
    <property type="project" value="TreeGrafter"/>
</dbReference>
<dbReference type="GO" id="GO:0070180">
    <property type="term" value="F:large ribosomal subunit rRNA binding"/>
    <property type="evidence" value="ECO:0007669"/>
    <property type="project" value="UniProtKB-UniRule"/>
</dbReference>
<dbReference type="GO" id="GO:0003735">
    <property type="term" value="F:structural constituent of ribosome"/>
    <property type="evidence" value="ECO:0007669"/>
    <property type="project" value="InterPro"/>
</dbReference>
<dbReference type="GO" id="GO:0006412">
    <property type="term" value="P:translation"/>
    <property type="evidence" value="ECO:0007669"/>
    <property type="project" value="UniProtKB-UniRule"/>
</dbReference>
<dbReference type="CDD" id="cd00349">
    <property type="entry name" value="Ribosomal_L11"/>
    <property type="match status" value="1"/>
</dbReference>
<dbReference type="FunFam" id="1.10.10.250:FF:000001">
    <property type="entry name" value="50S ribosomal protein L11"/>
    <property type="match status" value="1"/>
</dbReference>
<dbReference type="FunFam" id="3.30.1550.10:FF:000001">
    <property type="entry name" value="50S ribosomal protein L11"/>
    <property type="match status" value="1"/>
</dbReference>
<dbReference type="Gene3D" id="1.10.10.250">
    <property type="entry name" value="Ribosomal protein L11, C-terminal domain"/>
    <property type="match status" value="1"/>
</dbReference>
<dbReference type="Gene3D" id="3.30.1550.10">
    <property type="entry name" value="Ribosomal protein L11/L12, N-terminal domain"/>
    <property type="match status" value="1"/>
</dbReference>
<dbReference type="HAMAP" id="MF_00736">
    <property type="entry name" value="Ribosomal_uL11"/>
    <property type="match status" value="1"/>
</dbReference>
<dbReference type="InterPro" id="IPR000911">
    <property type="entry name" value="Ribosomal_uL11"/>
</dbReference>
<dbReference type="InterPro" id="IPR006519">
    <property type="entry name" value="Ribosomal_uL11_bac-typ"/>
</dbReference>
<dbReference type="InterPro" id="IPR020783">
    <property type="entry name" value="Ribosomal_uL11_C"/>
</dbReference>
<dbReference type="InterPro" id="IPR036769">
    <property type="entry name" value="Ribosomal_uL11_C_sf"/>
</dbReference>
<dbReference type="InterPro" id="IPR020785">
    <property type="entry name" value="Ribosomal_uL11_CS"/>
</dbReference>
<dbReference type="InterPro" id="IPR020784">
    <property type="entry name" value="Ribosomal_uL11_N"/>
</dbReference>
<dbReference type="InterPro" id="IPR036796">
    <property type="entry name" value="Ribosomal_uL11_N_sf"/>
</dbReference>
<dbReference type="NCBIfam" id="TIGR01632">
    <property type="entry name" value="L11_bact"/>
    <property type="match status" value="1"/>
</dbReference>
<dbReference type="PANTHER" id="PTHR11661">
    <property type="entry name" value="60S RIBOSOMAL PROTEIN L12"/>
    <property type="match status" value="1"/>
</dbReference>
<dbReference type="PANTHER" id="PTHR11661:SF1">
    <property type="entry name" value="LARGE RIBOSOMAL SUBUNIT PROTEIN UL11M"/>
    <property type="match status" value="1"/>
</dbReference>
<dbReference type="Pfam" id="PF00298">
    <property type="entry name" value="Ribosomal_L11"/>
    <property type="match status" value="1"/>
</dbReference>
<dbReference type="Pfam" id="PF03946">
    <property type="entry name" value="Ribosomal_L11_N"/>
    <property type="match status" value="1"/>
</dbReference>
<dbReference type="SMART" id="SM00649">
    <property type="entry name" value="RL11"/>
    <property type="match status" value="1"/>
</dbReference>
<dbReference type="SUPFAM" id="SSF54747">
    <property type="entry name" value="Ribosomal L11/L12e N-terminal domain"/>
    <property type="match status" value="1"/>
</dbReference>
<dbReference type="SUPFAM" id="SSF46906">
    <property type="entry name" value="Ribosomal protein L11, C-terminal domain"/>
    <property type="match status" value="1"/>
</dbReference>
<dbReference type="PROSITE" id="PS00359">
    <property type="entry name" value="RIBOSOMAL_L11"/>
    <property type="match status" value="1"/>
</dbReference>
<organism>
    <name type="scientific">Pectobacterium carotovorum subsp. carotovorum (strain PC1)</name>
    <dbReference type="NCBI Taxonomy" id="561230"/>
    <lineage>
        <taxon>Bacteria</taxon>
        <taxon>Pseudomonadati</taxon>
        <taxon>Pseudomonadota</taxon>
        <taxon>Gammaproteobacteria</taxon>
        <taxon>Enterobacterales</taxon>
        <taxon>Pectobacteriaceae</taxon>
        <taxon>Pectobacterium</taxon>
    </lineage>
</organism>